<evidence type="ECO:0000256" key="1">
    <source>
        <dbReference type="SAM" id="MobiDB-lite"/>
    </source>
</evidence>
<evidence type="ECO:0000269" key="2">
    <source>
    </source>
</evidence>
<evidence type="ECO:0000303" key="3">
    <source>
    </source>
</evidence>
<evidence type="ECO:0000305" key="4"/>
<evidence type="ECO:0000312" key="5">
    <source>
        <dbReference type="HGNC" id="HGNC:33271"/>
    </source>
</evidence>
<feature type="chain" id="PRO_0000433117" description="Cancer/testis antigen family 45 member A6">
    <location>
        <begin position="1"/>
        <end position="189"/>
    </location>
</feature>
<feature type="region of interest" description="Disordered" evidence="1">
    <location>
        <begin position="1"/>
        <end position="27"/>
    </location>
</feature>
<feature type="region of interest" description="Disordered" evidence="1">
    <location>
        <begin position="82"/>
        <end position="118"/>
    </location>
</feature>
<feature type="compositionally biased region" description="Basic and acidic residues" evidence="1">
    <location>
        <begin position="1"/>
        <end position="23"/>
    </location>
</feature>
<feature type="sequence conflict" description="In Ref. 3; CAI41551 and 1; AAW66469." evidence="4" ref="3 1">
    <original>E</original>
    <variation>A</variation>
    <location>
        <position position="55"/>
    </location>
</feature>
<feature type="sequence conflict" description="In Ref. 3; CAI41551 and 1; AAW66469." evidence="4" ref="3 1">
    <original>G</original>
    <variation>R</variation>
    <location>
        <position position="83"/>
    </location>
</feature>
<feature type="sequence conflict" description="In Ref. 3; CAI41551 and 1; AAW66469." evidence="4" ref="3 1">
    <original>R</original>
    <variation>Q</variation>
    <location>
        <position position="120"/>
    </location>
</feature>
<reference key="1">
    <citation type="journal article" date="2005" name="Proc. Natl. Acad. Sci. U.S.A.">
        <title>Identification of cancer/testis-antigen genes by massively parallel signature sequencing.</title>
        <authorList>
            <person name="Chen Y.-T."/>
            <person name="Scanlan M.J."/>
            <person name="Venditti C.A."/>
            <person name="Chua R."/>
            <person name="Theiler G."/>
            <person name="Stevenson B.J."/>
            <person name="Iseli C."/>
            <person name="Gure A.O."/>
            <person name="Vasicek T."/>
            <person name="Strausberg R.L."/>
            <person name="Jongeneel C.V."/>
            <person name="Old L.J."/>
            <person name="Simpson A.J.G."/>
        </authorList>
    </citation>
    <scope>NUCLEOTIDE SEQUENCE [MRNA]</scope>
    <scope>TISSUE SPECIFICITY</scope>
    <scope>IDENTIFICATION AS A CANCER/TESTIS ANTIGEN</scope>
</reference>
<reference key="2">
    <citation type="journal article" date="2004" name="Nat. Genet.">
        <title>Complete sequencing and characterization of 21,243 full-length human cDNAs.</title>
        <authorList>
            <person name="Ota T."/>
            <person name="Suzuki Y."/>
            <person name="Nishikawa T."/>
            <person name="Otsuki T."/>
            <person name="Sugiyama T."/>
            <person name="Irie R."/>
            <person name="Wakamatsu A."/>
            <person name="Hayashi K."/>
            <person name="Sato H."/>
            <person name="Nagai K."/>
            <person name="Kimura K."/>
            <person name="Makita H."/>
            <person name="Sekine M."/>
            <person name="Obayashi M."/>
            <person name="Nishi T."/>
            <person name="Shibahara T."/>
            <person name="Tanaka T."/>
            <person name="Ishii S."/>
            <person name="Yamamoto J."/>
            <person name="Saito K."/>
            <person name="Kawai Y."/>
            <person name="Isono Y."/>
            <person name="Nakamura Y."/>
            <person name="Nagahari K."/>
            <person name="Murakami K."/>
            <person name="Yasuda T."/>
            <person name="Iwayanagi T."/>
            <person name="Wagatsuma M."/>
            <person name="Shiratori A."/>
            <person name="Sudo H."/>
            <person name="Hosoiri T."/>
            <person name="Kaku Y."/>
            <person name="Kodaira H."/>
            <person name="Kondo H."/>
            <person name="Sugawara M."/>
            <person name="Takahashi M."/>
            <person name="Kanda K."/>
            <person name="Yokoi T."/>
            <person name="Furuya T."/>
            <person name="Kikkawa E."/>
            <person name="Omura Y."/>
            <person name="Abe K."/>
            <person name="Kamihara K."/>
            <person name="Katsuta N."/>
            <person name="Sato K."/>
            <person name="Tanikawa M."/>
            <person name="Yamazaki M."/>
            <person name="Ninomiya K."/>
            <person name="Ishibashi T."/>
            <person name="Yamashita H."/>
            <person name="Murakawa K."/>
            <person name="Fujimori K."/>
            <person name="Tanai H."/>
            <person name="Kimata M."/>
            <person name="Watanabe M."/>
            <person name="Hiraoka S."/>
            <person name="Chiba Y."/>
            <person name="Ishida S."/>
            <person name="Ono Y."/>
            <person name="Takiguchi S."/>
            <person name="Watanabe S."/>
            <person name="Yosida M."/>
            <person name="Hotuta T."/>
            <person name="Kusano J."/>
            <person name="Kanehori K."/>
            <person name="Takahashi-Fujii A."/>
            <person name="Hara H."/>
            <person name="Tanase T.-O."/>
            <person name="Nomura Y."/>
            <person name="Togiya S."/>
            <person name="Komai F."/>
            <person name="Hara R."/>
            <person name="Takeuchi K."/>
            <person name="Arita M."/>
            <person name="Imose N."/>
            <person name="Musashino K."/>
            <person name="Yuuki H."/>
            <person name="Oshima A."/>
            <person name="Sasaki N."/>
            <person name="Aotsuka S."/>
            <person name="Yoshikawa Y."/>
            <person name="Matsunawa H."/>
            <person name="Ichihara T."/>
            <person name="Shiohata N."/>
            <person name="Sano S."/>
            <person name="Moriya S."/>
            <person name="Momiyama H."/>
            <person name="Satoh N."/>
            <person name="Takami S."/>
            <person name="Terashima Y."/>
            <person name="Suzuki O."/>
            <person name="Nakagawa S."/>
            <person name="Senoh A."/>
            <person name="Mizoguchi H."/>
            <person name="Goto Y."/>
            <person name="Shimizu F."/>
            <person name="Wakebe H."/>
            <person name="Hishigaki H."/>
            <person name="Watanabe T."/>
            <person name="Sugiyama A."/>
            <person name="Takemoto M."/>
            <person name="Kawakami B."/>
            <person name="Yamazaki M."/>
            <person name="Watanabe K."/>
            <person name="Kumagai A."/>
            <person name="Itakura S."/>
            <person name="Fukuzumi Y."/>
            <person name="Fujimori Y."/>
            <person name="Komiyama M."/>
            <person name="Tashiro H."/>
            <person name="Tanigami A."/>
            <person name="Fujiwara T."/>
            <person name="Ono T."/>
            <person name="Yamada K."/>
            <person name="Fujii Y."/>
            <person name="Ozaki K."/>
            <person name="Hirao M."/>
            <person name="Ohmori Y."/>
            <person name="Kawabata A."/>
            <person name="Hikiji T."/>
            <person name="Kobatake N."/>
            <person name="Inagaki H."/>
            <person name="Ikema Y."/>
            <person name="Okamoto S."/>
            <person name="Okitani R."/>
            <person name="Kawakami T."/>
            <person name="Noguchi S."/>
            <person name="Itoh T."/>
            <person name="Shigeta K."/>
            <person name="Senba T."/>
            <person name="Matsumura K."/>
            <person name="Nakajima Y."/>
            <person name="Mizuno T."/>
            <person name="Morinaga M."/>
            <person name="Sasaki M."/>
            <person name="Togashi T."/>
            <person name="Oyama M."/>
            <person name="Hata H."/>
            <person name="Watanabe M."/>
            <person name="Komatsu T."/>
            <person name="Mizushima-Sugano J."/>
            <person name="Satoh T."/>
            <person name="Shirai Y."/>
            <person name="Takahashi Y."/>
            <person name="Nakagawa K."/>
            <person name="Okumura K."/>
            <person name="Nagase T."/>
            <person name="Nomura N."/>
            <person name="Kikuchi H."/>
            <person name="Masuho Y."/>
            <person name="Yamashita R."/>
            <person name="Nakai K."/>
            <person name="Yada T."/>
            <person name="Nakamura Y."/>
            <person name="Ohara O."/>
            <person name="Isogai T."/>
            <person name="Sugano S."/>
        </authorList>
    </citation>
    <scope>NUCLEOTIDE SEQUENCE [LARGE SCALE MRNA]</scope>
    <source>
        <tissue>Testis</tissue>
    </source>
</reference>
<reference key="3">
    <citation type="journal article" date="2005" name="Nature">
        <title>The DNA sequence of the human X chromosome.</title>
        <authorList>
            <person name="Ross M.T."/>
            <person name="Grafham D.V."/>
            <person name="Coffey A.J."/>
            <person name="Scherer S."/>
            <person name="McLay K."/>
            <person name="Muzny D."/>
            <person name="Platzer M."/>
            <person name="Howell G.R."/>
            <person name="Burrows C."/>
            <person name="Bird C.P."/>
            <person name="Frankish A."/>
            <person name="Lovell F.L."/>
            <person name="Howe K.L."/>
            <person name="Ashurst J.L."/>
            <person name="Fulton R.S."/>
            <person name="Sudbrak R."/>
            <person name="Wen G."/>
            <person name="Jones M.C."/>
            <person name="Hurles M.E."/>
            <person name="Andrews T.D."/>
            <person name="Scott C.E."/>
            <person name="Searle S."/>
            <person name="Ramser J."/>
            <person name="Whittaker A."/>
            <person name="Deadman R."/>
            <person name="Carter N.P."/>
            <person name="Hunt S.E."/>
            <person name="Chen R."/>
            <person name="Cree A."/>
            <person name="Gunaratne P."/>
            <person name="Havlak P."/>
            <person name="Hodgson A."/>
            <person name="Metzker M.L."/>
            <person name="Richards S."/>
            <person name="Scott G."/>
            <person name="Steffen D."/>
            <person name="Sodergren E."/>
            <person name="Wheeler D.A."/>
            <person name="Worley K.C."/>
            <person name="Ainscough R."/>
            <person name="Ambrose K.D."/>
            <person name="Ansari-Lari M.A."/>
            <person name="Aradhya S."/>
            <person name="Ashwell R.I."/>
            <person name="Babbage A.K."/>
            <person name="Bagguley C.L."/>
            <person name="Ballabio A."/>
            <person name="Banerjee R."/>
            <person name="Barker G.E."/>
            <person name="Barlow K.F."/>
            <person name="Barrett I.P."/>
            <person name="Bates K.N."/>
            <person name="Beare D.M."/>
            <person name="Beasley H."/>
            <person name="Beasley O."/>
            <person name="Beck A."/>
            <person name="Bethel G."/>
            <person name="Blechschmidt K."/>
            <person name="Brady N."/>
            <person name="Bray-Allen S."/>
            <person name="Bridgeman A.M."/>
            <person name="Brown A.J."/>
            <person name="Brown M.J."/>
            <person name="Bonnin D."/>
            <person name="Bruford E.A."/>
            <person name="Buhay C."/>
            <person name="Burch P."/>
            <person name="Burford D."/>
            <person name="Burgess J."/>
            <person name="Burrill W."/>
            <person name="Burton J."/>
            <person name="Bye J.M."/>
            <person name="Carder C."/>
            <person name="Carrel L."/>
            <person name="Chako J."/>
            <person name="Chapman J.C."/>
            <person name="Chavez D."/>
            <person name="Chen E."/>
            <person name="Chen G."/>
            <person name="Chen Y."/>
            <person name="Chen Z."/>
            <person name="Chinault C."/>
            <person name="Ciccodicola A."/>
            <person name="Clark S.Y."/>
            <person name="Clarke G."/>
            <person name="Clee C.M."/>
            <person name="Clegg S."/>
            <person name="Clerc-Blankenburg K."/>
            <person name="Clifford K."/>
            <person name="Cobley V."/>
            <person name="Cole C.G."/>
            <person name="Conquer J.S."/>
            <person name="Corby N."/>
            <person name="Connor R.E."/>
            <person name="David R."/>
            <person name="Davies J."/>
            <person name="Davis C."/>
            <person name="Davis J."/>
            <person name="Delgado O."/>
            <person name="Deshazo D."/>
            <person name="Dhami P."/>
            <person name="Ding Y."/>
            <person name="Dinh H."/>
            <person name="Dodsworth S."/>
            <person name="Draper H."/>
            <person name="Dugan-Rocha S."/>
            <person name="Dunham A."/>
            <person name="Dunn M."/>
            <person name="Durbin K.J."/>
            <person name="Dutta I."/>
            <person name="Eades T."/>
            <person name="Ellwood M."/>
            <person name="Emery-Cohen A."/>
            <person name="Errington H."/>
            <person name="Evans K.L."/>
            <person name="Faulkner L."/>
            <person name="Francis F."/>
            <person name="Frankland J."/>
            <person name="Fraser A.E."/>
            <person name="Galgoczy P."/>
            <person name="Gilbert J."/>
            <person name="Gill R."/>
            <person name="Gloeckner G."/>
            <person name="Gregory S.G."/>
            <person name="Gribble S."/>
            <person name="Griffiths C."/>
            <person name="Grocock R."/>
            <person name="Gu Y."/>
            <person name="Gwilliam R."/>
            <person name="Hamilton C."/>
            <person name="Hart E.A."/>
            <person name="Hawes A."/>
            <person name="Heath P.D."/>
            <person name="Heitmann K."/>
            <person name="Hennig S."/>
            <person name="Hernandez J."/>
            <person name="Hinzmann B."/>
            <person name="Ho S."/>
            <person name="Hoffs M."/>
            <person name="Howden P.J."/>
            <person name="Huckle E.J."/>
            <person name="Hume J."/>
            <person name="Hunt P.J."/>
            <person name="Hunt A.R."/>
            <person name="Isherwood J."/>
            <person name="Jacob L."/>
            <person name="Johnson D."/>
            <person name="Jones S."/>
            <person name="de Jong P.J."/>
            <person name="Joseph S.S."/>
            <person name="Keenan S."/>
            <person name="Kelly S."/>
            <person name="Kershaw J.K."/>
            <person name="Khan Z."/>
            <person name="Kioschis P."/>
            <person name="Klages S."/>
            <person name="Knights A.J."/>
            <person name="Kosiura A."/>
            <person name="Kovar-Smith C."/>
            <person name="Laird G.K."/>
            <person name="Langford C."/>
            <person name="Lawlor S."/>
            <person name="Leversha M."/>
            <person name="Lewis L."/>
            <person name="Liu W."/>
            <person name="Lloyd C."/>
            <person name="Lloyd D.M."/>
            <person name="Loulseged H."/>
            <person name="Loveland J.E."/>
            <person name="Lovell J.D."/>
            <person name="Lozado R."/>
            <person name="Lu J."/>
            <person name="Lyne R."/>
            <person name="Ma J."/>
            <person name="Maheshwari M."/>
            <person name="Matthews L.H."/>
            <person name="McDowall J."/>
            <person name="McLaren S."/>
            <person name="McMurray A."/>
            <person name="Meidl P."/>
            <person name="Meitinger T."/>
            <person name="Milne S."/>
            <person name="Miner G."/>
            <person name="Mistry S.L."/>
            <person name="Morgan M."/>
            <person name="Morris S."/>
            <person name="Mueller I."/>
            <person name="Mullikin J.C."/>
            <person name="Nguyen N."/>
            <person name="Nordsiek G."/>
            <person name="Nyakatura G."/>
            <person name="O'dell C.N."/>
            <person name="Okwuonu G."/>
            <person name="Palmer S."/>
            <person name="Pandian R."/>
            <person name="Parker D."/>
            <person name="Parrish J."/>
            <person name="Pasternak S."/>
            <person name="Patel D."/>
            <person name="Pearce A.V."/>
            <person name="Pearson D.M."/>
            <person name="Pelan S.E."/>
            <person name="Perez L."/>
            <person name="Porter K.M."/>
            <person name="Ramsey Y."/>
            <person name="Reichwald K."/>
            <person name="Rhodes S."/>
            <person name="Ridler K.A."/>
            <person name="Schlessinger D."/>
            <person name="Schueler M.G."/>
            <person name="Sehra H.K."/>
            <person name="Shaw-Smith C."/>
            <person name="Shen H."/>
            <person name="Sheridan E.M."/>
            <person name="Shownkeen R."/>
            <person name="Skuce C.D."/>
            <person name="Smith M.L."/>
            <person name="Sotheran E.C."/>
            <person name="Steingruber H.E."/>
            <person name="Steward C.A."/>
            <person name="Storey R."/>
            <person name="Swann R.M."/>
            <person name="Swarbreck D."/>
            <person name="Tabor P.E."/>
            <person name="Taudien S."/>
            <person name="Taylor T."/>
            <person name="Teague B."/>
            <person name="Thomas K."/>
            <person name="Thorpe A."/>
            <person name="Timms K."/>
            <person name="Tracey A."/>
            <person name="Trevanion S."/>
            <person name="Tromans A.C."/>
            <person name="d'Urso M."/>
            <person name="Verduzco D."/>
            <person name="Villasana D."/>
            <person name="Waldron L."/>
            <person name="Wall M."/>
            <person name="Wang Q."/>
            <person name="Warren J."/>
            <person name="Warry G.L."/>
            <person name="Wei X."/>
            <person name="West A."/>
            <person name="Whitehead S.L."/>
            <person name="Whiteley M.N."/>
            <person name="Wilkinson J.E."/>
            <person name="Willey D.L."/>
            <person name="Williams G."/>
            <person name="Williams L."/>
            <person name="Williamson A."/>
            <person name="Williamson H."/>
            <person name="Wilming L."/>
            <person name="Woodmansey R.L."/>
            <person name="Wray P.W."/>
            <person name="Yen J."/>
            <person name="Zhang J."/>
            <person name="Zhou J."/>
            <person name="Zoghbi H."/>
            <person name="Zorilla S."/>
            <person name="Buck D."/>
            <person name="Reinhardt R."/>
            <person name="Poustka A."/>
            <person name="Rosenthal A."/>
            <person name="Lehrach H."/>
            <person name="Meindl A."/>
            <person name="Minx P.J."/>
            <person name="Hillier L.W."/>
            <person name="Willard H.F."/>
            <person name="Wilson R.K."/>
            <person name="Waterston R.H."/>
            <person name="Rice C.M."/>
            <person name="Vaudin M."/>
            <person name="Coulson A."/>
            <person name="Nelson D.L."/>
            <person name="Weinstock G."/>
            <person name="Sulston J.E."/>
            <person name="Durbin R.M."/>
            <person name="Hubbard T."/>
            <person name="Gibbs R.A."/>
            <person name="Beck S."/>
            <person name="Rogers J."/>
            <person name="Bentley D.R."/>
        </authorList>
    </citation>
    <scope>NUCLEOTIDE SEQUENCE [LARGE SCALE GENOMIC DNA]</scope>
</reference>
<gene>
    <name evidence="5" type="primary">CT45A6</name>
    <name evidence="3" type="synonym">CT45-6</name>
</gene>
<protein>
    <recommendedName>
        <fullName evidence="5">Cancer/testis antigen family 45 member A6</fullName>
    </recommendedName>
    <alternativeName>
        <fullName evidence="3">Cancer/testis antigen 45-6</fullName>
    </alternativeName>
    <alternativeName>
        <fullName evidence="4">Cancer/testis antigen 45A6</fullName>
    </alternativeName>
</protein>
<comment type="tissue specificity">
    <text evidence="2">Testis specific. Expressed in cancer cell lines.</text>
</comment>
<comment type="similarity">
    <text>Belongs to the CT45 family.</text>
</comment>
<dbReference type="EMBL" id="AY743714">
    <property type="protein sequence ID" value="AAW66469.1"/>
    <property type="molecule type" value="mRNA"/>
</dbReference>
<dbReference type="EMBL" id="AC240441">
    <property type="status" value="NOT_ANNOTATED_CDS"/>
    <property type="molecule type" value="Genomic_DNA"/>
</dbReference>
<dbReference type="EMBL" id="AL590618">
    <property type="protein sequence ID" value="CAI41551.1"/>
    <property type="molecule type" value="Genomic_DNA"/>
</dbReference>
<dbReference type="CCDS" id="CCDS35407.1"/>
<dbReference type="RefSeq" id="NP_001007552.2">
    <property type="nucleotide sequence ID" value="NM_001007551.4"/>
</dbReference>
<dbReference type="RefSeq" id="NP_001017438.2">
    <property type="nucleotide sequence ID" value="NM_001017438.3"/>
</dbReference>
<dbReference type="RefSeq" id="NP_001165759.2">
    <property type="nucleotide sequence ID" value="NM_001172288.2"/>
</dbReference>
<dbReference type="RefSeq" id="NP_001278472.1">
    <property type="nucleotide sequence ID" value="NM_001291543.1"/>
</dbReference>
<dbReference type="RefSeq" id="XP_003960131.1">
    <property type="nucleotide sequence ID" value="XM_003960082.4"/>
</dbReference>
<dbReference type="RefSeq" id="XP_005262482.2">
    <property type="nucleotide sequence ID" value="XM_005262425.5"/>
</dbReference>
<dbReference type="RefSeq" id="XP_011529531.1">
    <property type="nucleotide sequence ID" value="XM_011531229.2"/>
</dbReference>
<dbReference type="RefSeq" id="XP_011529643.1">
    <property type="nucleotide sequence ID" value="XM_011531341.2"/>
</dbReference>
<dbReference type="RefSeq" id="XP_011529653.1">
    <property type="nucleotide sequence ID" value="XM_011531351.3"/>
</dbReference>
<dbReference type="SMR" id="P0DMU7"/>
<dbReference type="FunCoup" id="P0DMU7">
    <property type="interactions" value="2"/>
</dbReference>
<dbReference type="IntAct" id="P0DMU7">
    <property type="interactions" value="71"/>
</dbReference>
<dbReference type="iPTMnet" id="P0DMU7"/>
<dbReference type="PhosphoSitePlus" id="P0DMU7"/>
<dbReference type="BioMuta" id="CT45A6"/>
<dbReference type="jPOST" id="P0DMU7"/>
<dbReference type="MassIVE" id="P0DMU7"/>
<dbReference type="PeptideAtlas" id="P0DMU7"/>
<dbReference type="Pumba" id="P0DMU7"/>
<dbReference type="Antibodypedia" id="77503">
    <property type="antibodies" value="1 antibodies from 1 providers"/>
</dbReference>
<dbReference type="DNASU" id="441521"/>
<dbReference type="Ensembl" id="ENST00000612878.4">
    <property type="protein sequence ID" value="ENSP00000483910.1"/>
    <property type="gene ID" value="ENSG00000278289.5"/>
</dbReference>
<dbReference type="Ensembl" id="ENST00000620654.2">
    <property type="protein sequence ID" value="ENSP00000479608.2"/>
    <property type="gene ID" value="ENSG00000278289.5"/>
</dbReference>
<dbReference type="GeneID" id="101060211"/>
<dbReference type="GeneID" id="441521"/>
<dbReference type="GeneID" id="541465"/>
<dbReference type="KEGG" id="hsa:101060211"/>
<dbReference type="KEGG" id="hsa:441521"/>
<dbReference type="KEGG" id="hsa:541465"/>
<dbReference type="MANE-Select" id="ENST00000620654.2">
    <property type="protein sequence ID" value="ENSP00000479608.2"/>
    <property type="RefSeq nucleotide sequence ID" value="NM_001017438.3"/>
    <property type="RefSeq protein sequence ID" value="NP_001017438.2"/>
</dbReference>
<dbReference type="AGR" id="HGNC:33270"/>
<dbReference type="AGR" id="HGNC:33271"/>
<dbReference type="AGR" id="HGNC:51260"/>
<dbReference type="CTD" id="101060211"/>
<dbReference type="CTD" id="441521"/>
<dbReference type="CTD" id="541465"/>
<dbReference type="GeneCards" id="CT45A6"/>
<dbReference type="HGNC" id="HGNC:33271">
    <property type="gene designation" value="CT45A6"/>
</dbReference>
<dbReference type="HPA" id="ENSG00000278289">
    <property type="expression patterns" value="Group enriched (brain, pituitary gland)"/>
</dbReference>
<dbReference type="MIM" id="300797">
    <property type="type" value="gene"/>
</dbReference>
<dbReference type="neXtProt" id="NX_P0DMU7"/>
<dbReference type="OpenTargets" id="ENSG00000228836"/>
<dbReference type="OpenTargets" id="ENSG00000278289"/>
<dbReference type="VEuPathDB" id="HostDB:ENSG00000278289"/>
<dbReference type="InParanoid" id="P0DMU7"/>
<dbReference type="OMA" id="IRCIGQK"/>
<dbReference type="OrthoDB" id="9520782at2759"/>
<dbReference type="PAN-GO" id="P0DMU7">
    <property type="GO annotations" value="2 GO annotations based on evolutionary models"/>
</dbReference>
<dbReference type="PhylomeDB" id="P0DMU7"/>
<dbReference type="PathwayCommons" id="P0DMU7"/>
<dbReference type="BioGRID-ORCS" id="101060211">
    <property type="hits" value="9 hits in 105 CRISPR screens"/>
</dbReference>
<dbReference type="BioGRID-ORCS" id="441521">
    <property type="hits" value="8 hits in 672 CRISPR screens"/>
</dbReference>
<dbReference type="BioGRID-ORCS" id="541465">
    <property type="hits" value="5 hits in 218 CRISPR screens"/>
</dbReference>
<dbReference type="Pharos" id="P0DMU7">
    <property type="development level" value="Tdark"/>
</dbReference>
<dbReference type="PRO" id="PR:P0DMU7"/>
<dbReference type="Proteomes" id="UP000005640">
    <property type="component" value="Chromosome X"/>
</dbReference>
<dbReference type="RNAct" id="P0DMU7">
    <property type="molecule type" value="protein"/>
</dbReference>
<dbReference type="Bgee" id="ENSG00000278289">
    <property type="expression patterns" value="Expressed in male germ line stem cell (sensu Vertebrata) in testis and 26 other cell types or tissues"/>
</dbReference>
<dbReference type="InterPro" id="IPR029307">
    <property type="entry name" value="INT_SG_DDX_CT_C"/>
</dbReference>
<dbReference type="InterPro" id="IPR051113">
    <property type="entry name" value="Integrator_subunit6"/>
</dbReference>
<dbReference type="PANTHER" id="PTHR12957">
    <property type="entry name" value="DEAD/H BOX POLYPEPTIDE 26/DICE1-RELATED"/>
    <property type="match status" value="1"/>
</dbReference>
<dbReference type="PANTHER" id="PTHR12957:SF2">
    <property type="entry name" value="INTEGRATOR COMPLEX SUBUNIT 6"/>
    <property type="match status" value="1"/>
</dbReference>
<dbReference type="Pfam" id="PF15300">
    <property type="entry name" value="INT_SG_DDX_CT_C"/>
    <property type="match status" value="1"/>
</dbReference>
<keyword id="KW-1185">Reference proteome</keyword>
<sequence>MTDKTEKVAVDPETVFKRPRECDSPSYQKRQRMALLARKQGAGDSLIAGSAMSKEKKLMTGHAIPPSQLDSQIDDFTGFSKDGMMQKPGSNAPVGGNVTSSFSGDDLECRETASSPKSQREINADIKRKLVKELRCVGQKYEKIFEMLEGVQGPTAVRKRFFESIIKEAARCMRRDFVKHLKKKLKRMI</sequence>
<accession>P0DMU7</accession>
<accession>Q8N7B7</accession>
<name>CT456_HUMAN</name>
<proteinExistence type="evidence at transcript level"/>
<organism>
    <name type="scientific">Homo sapiens</name>
    <name type="common">Human</name>
    <dbReference type="NCBI Taxonomy" id="9606"/>
    <lineage>
        <taxon>Eukaryota</taxon>
        <taxon>Metazoa</taxon>
        <taxon>Chordata</taxon>
        <taxon>Craniata</taxon>
        <taxon>Vertebrata</taxon>
        <taxon>Euteleostomi</taxon>
        <taxon>Mammalia</taxon>
        <taxon>Eutheria</taxon>
        <taxon>Euarchontoglires</taxon>
        <taxon>Primates</taxon>
        <taxon>Haplorrhini</taxon>
        <taxon>Catarrhini</taxon>
        <taxon>Hominidae</taxon>
        <taxon>Homo</taxon>
    </lineage>
</organism>